<dbReference type="EC" id="2.1.3.3" evidence="2"/>
<dbReference type="EMBL" id="CP000458">
    <property type="protein sequence ID" value="ABK09303.1"/>
    <property type="molecule type" value="Genomic_DNA"/>
</dbReference>
<dbReference type="RefSeq" id="WP_006482207.1">
    <property type="nucleotide sequence ID" value="NC_008542.1"/>
</dbReference>
<dbReference type="SMR" id="A0K9X6"/>
<dbReference type="GeneID" id="98106160"/>
<dbReference type="KEGG" id="bch:Bcen2424_2553"/>
<dbReference type="HOGENOM" id="CLU_043846_3_2_4"/>
<dbReference type="UniPathway" id="UPA00068">
    <property type="reaction ID" value="UER00112"/>
</dbReference>
<dbReference type="GO" id="GO:0005737">
    <property type="term" value="C:cytoplasm"/>
    <property type="evidence" value="ECO:0007669"/>
    <property type="project" value="UniProtKB-SubCell"/>
</dbReference>
<dbReference type="GO" id="GO:0016597">
    <property type="term" value="F:amino acid binding"/>
    <property type="evidence" value="ECO:0007669"/>
    <property type="project" value="InterPro"/>
</dbReference>
<dbReference type="GO" id="GO:0004585">
    <property type="term" value="F:ornithine carbamoyltransferase activity"/>
    <property type="evidence" value="ECO:0007669"/>
    <property type="project" value="UniProtKB-UniRule"/>
</dbReference>
<dbReference type="GO" id="GO:0042450">
    <property type="term" value="P:arginine biosynthetic process via ornithine"/>
    <property type="evidence" value="ECO:0007669"/>
    <property type="project" value="TreeGrafter"/>
</dbReference>
<dbReference type="GO" id="GO:0019240">
    <property type="term" value="P:citrulline biosynthetic process"/>
    <property type="evidence" value="ECO:0007669"/>
    <property type="project" value="TreeGrafter"/>
</dbReference>
<dbReference type="GO" id="GO:0006526">
    <property type="term" value="P:L-arginine biosynthetic process"/>
    <property type="evidence" value="ECO:0007669"/>
    <property type="project" value="UniProtKB-UniRule"/>
</dbReference>
<dbReference type="FunFam" id="3.40.50.1370:FF:000008">
    <property type="entry name" value="Ornithine carbamoyltransferase"/>
    <property type="match status" value="1"/>
</dbReference>
<dbReference type="Gene3D" id="3.40.50.1370">
    <property type="entry name" value="Aspartate/ornithine carbamoyltransferase"/>
    <property type="match status" value="2"/>
</dbReference>
<dbReference type="HAMAP" id="MF_01109">
    <property type="entry name" value="OTCase"/>
    <property type="match status" value="1"/>
</dbReference>
<dbReference type="InterPro" id="IPR006132">
    <property type="entry name" value="Asp/Orn_carbamoyltranf_P-bd"/>
</dbReference>
<dbReference type="InterPro" id="IPR006130">
    <property type="entry name" value="Asp/Orn_carbamoylTrfase"/>
</dbReference>
<dbReference type="InterPro" id="IPR036901">
    <property type="entry name" value="Asp/Orn_carbamoylTrfase_sf"/>
</dbReference>
<dbReference type="InterPro" id="IPR006131">
    <property type="entry name" value="Asp_carbamoyltransf_Asp/Orn-bd"/>
</dbReference>
<dbReference type="InterPro" id="IPR002292">
    <property type="entry name" value="Orn/put_carbamltrans"/>
</dbReference>
<dbReference type="InterPro" id="IPR024904">
    <property type="entry name" value="OTCase_ArgI"/>
</dbReference>
<dbReference type="NCBIfam" id="TIGR00658">
    <property type="entry name" value="orni_carb_tr"/>
    <property type="match status" value="1"/>
</dbReference>
<dbReference type="NCBIfam" id="NF001986">
    <property type="entry name" value="PRK00779.1"/>
    <property type="match status" value="1"/>
</dbReference>
<dbReference type="PANTHER" id="PTHR45753">
    <property type="entry name" value="ORNITHINE CARBAMOYLTRANSFERASE, MITOCHONDRIAL"/>
    <property type="match status" value="1"/>
</dbReference>
<dbReference type="PANTHER" id="PTHR45753:SF3">
    <property type="entry name" value="ORNITHINE TRANSCARBAMYLASE, MITOCHONDRIAL"/>
    <property type="match status" value="1"/>
</dbReference>
<dbReference type="Pfam" id="PF00185">
    <property type="entry name" value="OTCace"/>
    <property type="match status" value="1"/>
</dbReference>
<dbReference type="Pfam" id="PF02729">
    <property type="entry name" value="OTCace_N"/>
    <property type="match status" value="1"/>
</dbReference>
<dbReference type="PRINTS" id="PR00100">
    <property type="entry name" value="AOTCASE"/>
</dbReference>
<dbReference type="PRINTS" id="PR00102">
    <property type="entry name" value="OTCASE"/>
</dbReference>
<dbReference type="SUPFAM" id="SSF53671">
    <property type="entry name" value="Aspartate/ornithine carbamoyltransferase"/>
    <property type="match status" value="1"/>
</dbReference>
<dbReference type="PROSITE" id="PS00097">
    <property type="entry name" value="CARBAMOYLTRANSFERASE"/>
    <property type="match status" value="1"/>
</dbReference>
<name>OTC_BURCH</name>
<accession>A0K9X6</accession>
<proteinExistence type="inferred from homology"/>
<reference key="1">
    <citation type="submission" date="2006-08" db="EMBL/GenBank/DDBJ databases">
        <title>Complete sequence of chromosome 1 of Burkholderia cenocepacia HI2424.</title>
        <authorList>
            <person name="Copeland A."/>
            <person name="Lucas S."/>
            <person name="Lapidus A."/>
            <person name="Barry K."/>
            <person name="Detter J.C."/>
            <person name="Glavina del Rio T."/>
            <person name="Hammon N."/>
            <person name="Israni S."/>
            <person name="Pitluck S."/>
            <person name="Chain P."/>
            <person name="Malfatti S."/>
            <person name="Shin M."/>
            <person name="Vergez L."/>
            <person name="Schmutz J."/>
            <person name="Larimer F."/>
            <person name="Land M."/>
            <person name="Hauser L."/>
            <person name="Kyrpides N."/>
            <person name="Kim E."/>
            <person name="LiPuma J.J."/>
            <person name="Gonzalez C.F."/>
            <person name="Konstantinidis K."/>
            <person name="Tiedje J.M."/>
            <person name="Richardson P."/>
        </authorList>
    </citation>
    <scope>NUCLEOTIDE SEQUENCE [LARGE SCALE GENOMIC DNA]</scope>
    <source>
        <strain>HI2424</strain>
    </source>
</reference>
<evidence type="ECO:0000250" key="1"/>
<evidence type="ECO:0000255" key="2">
    <source>
        <dbReference type="HAMAP-Rule" id="MF_01109"/>
    </source>
</evidence>
<organism>
    <name type="scientific">Burkholderia cenocepacia (strain HI2424)</name>
    <dbReference type="NCBI Taxonomy" id="331272"/>
    <lineage>
        <taxon>Bacteria</taxon>
        <taxon>Pseudomonadati</taxon>
        <taxon>Pseudomonadota</taxon>
        <taxon>Betaproteobacteria</taxon>
        <taxon>Burkholderiales</taxon>
        <taxon>Burkholderiaceae</taxon>
        <taxon>Burkholderia</taxon>
        <taxon>Burkholderia cepacia complex</taxon>
    </lineage>
</organism>
<comment type="function">
    <text evidence="1">Reversibly catalyzes the transfer of the carbamoyl group from carbamoyl phosphate (CP) to the N(epsilon) atom of ornithine (ORN) to produce L-citrulline.</text>
</comment>
<comment type="catalytic activity">
    <reaction evidence="2">
        <text>carbamoyl phosphate + L-ornithine = L-citrulline + phosphate + H(+)</text>
        <dbReference type="Rhea" id="RHEA:19513"/>
        <dbReference type="ChEBI" id="CHEBI:15378"/>
        <dbReference type="ChEBI" id="CHEBI:43474"/>
        <dbReference type="ChEBI" id="CHEBI:46911"/>
        <dbReference type="ChEBI" id="CHEBI:57743"/>
        <dbReference type="ChEBI" id="CHEBI:58228"/>
        <dbReference type="EC" id="2.1.3.3"/>
    </reaction>
</comment>
<comment type="pathway">
    <text evidence="2">Amino-acid biosynthesis; L-arginine biosynthesis; L-arginine from L-ornithine and carbamoyl phosphate: step 1/3.</text>
</comment>
<comment type="subcellular location">
    <subcellularLocation>
        <location evidence="2">Cytoplasm</location>
    </subcellularLocation>
</comment>
<comment type="similarity">
    <text evidence="2">Belongs to the aspartate/ornithine carbamoyltransferase superfamily. OTCase family.</text>
</comment>
<feature type="chain" id="PRO_1000065080" description="Ornithine carbamoyltransferase">
    <location>
        <begin position="1"/>
        <end position="309"/>
    </location>
</feature>
<feature type="binding site" evidence="2">
    <location>
        <begin position="56"/>
        <end position="59"/>
    </location>
    <ligand>
        <name>carbamoyl phosphate</name>
        <dbReference type="ChEBI" id="CHEBI:58228"/>
    </ligand>
</feature>
<feature type="binding site" evidence="2">
    <location>
        <position position="83"/>
    </location>
    <ligand>
        <name>carbamoyl phosphate</name>
        <dbReference type="ChEBI" id="CHEBI:58228"/>
    </ligand>
</feature>
<feature type="binding site" evidence="2">
    <location>
        <position position="107"/>
    </location>
    <ligand>
        <name>carbamoyl phosphate</name>
        <dbReference type="ChEBI" id="CHEBI:58228"/>
    </ligand>
</feature>
<feature type="binding site" evidence="2">
    <location>
        <begin position="134"/>
        <end position="137"/>
    </location>
    <ligand>
        <name>carbamoyl phosphate</name>
        <dbReference type="ChEBI" id="CHEBI:58228"/>
    </ligand>
</feature>
<feature type="binding site" evidence="2">
    <location>
        <position position="165"/>
    </location>
    <ligand>
        <name>L-ornithine</name>
        <dbReference type="ChEBI" id="CHEBI:46911"/>
    </ligand>
</feature>
<feature type="binding site" evidence="2">
    <location>
        <position position="223"/>
    </location>
    <ligand>
        <name>L-ornithine</name>
        <dbReference type="ChEBI" id="CHEBI:46911"/>
    </ligand>
</feature>
<feature type="binding site" evidence="2">
    <location>
        <begin position="227"/>
        <end position="228"/>
    </location>
    <ligand>
        <name>L-ornithine</name>
        <dbReference type="ChEBI" id="CHEBI:46911"/>
    </ligand>
</feature>
<feature type="binding site" evidence="2">
    <location>
        <begin position="263"/>
        <end position="264"/>
    </location>
    <ligand>
        <name>carbamoyl phosphate</name>
        <dbReference type="ChEBI" id="CHEBI:58228"/>
    </ligand>
</feature>
<feature type="binding site" evidence="2">
    <location>
        <position position="291"/>
    </location>
    <ligand>
        <name>carbamoyl phosphate</name>
        <dbReference type="ChEBI" id="CHEBI:58228"/>
    </ligand>
</feature>
<protein>
    <recommendedName>
        <fullName evidence="2">Ornithine carbamoyltransferase</fullName>
        <shortName evidence="2">OTCase</shortName>
        <ecNumber evidence="2">2.1.3.3</ecNumber>
    </recommendedName>
</protein>
<gene>
    <name evidence="2" type="primary">argF</name>
    <name type="ordered locus">Bcen2424_2553</name>
</gene>
<keyword id="KW-0028">Amino-acid biosynthesis</keyword>
<keyword id="KW-0055">Arginine biosynthesis</keyword>
<keyword id="KW-0963">Cytoplasm</keyword>
<keyword id="KW-0808">Transferase</keyword>
<sequence>MTAKTIRHYLQFKDFSLEDYEYVLERTGILKRKFKNYETYHPLHDRTLAMIFEKSSTRTRLSFEAGIFQLGGHAVFMSTRDTQLGRGEPVEDSAQVISRMVDIIMIRTFEQDVITRFAQNSRVPVINGLTNEYHPCQVLADIFTYYEHRGPIAGKTVAWVGDANNMLYTWIEAAQILGFKLRLSTPPGYALDMKLVSPDSAPFYEVFDDPNEACKGADLVTTDVWTSMGFEAENEARKQAFADWCVDEEMMGHANPDALFMHCLPAHRGEEVTAGVIDGPQSVVWDEAENRLHVQKALMEFLLLGRLKH</sequence>